<comment type="function">
    <text evidence="1">Binds together with bS18 to 16S ribosomal RNA.</text>
</comment>
<comment type="similarity">
    <text evidence="2">Belongs to the bacterial ribosomal protein bS6 family.</text>
</comment>
<organism>
    <name type="scientific">Chlamydia muridarum (strain MoPn / Nigg)</name>
    <dbReference type="NCBI Taxonomy" id="243161"/>
    <lineage>
        <taxon>Bacteria</taxon>
        <taxon>Pseudomonadati</taxon>
        <taxon>Chlamydiota</taxon>
        <taxon>Chlamydiia</taxon>
        <taxon>Chlamydiales</taxon>
        <taxon>Chlamydiaceae</taxon>
        <taxon>Chlamydia/Chlamydophila group</taxon>
        <taxon>Chlamydia</taxon>
    </lineage>
</organism>
<protein>
    <recommendedName>
        <fullName evidence="2">Small ribosomal subunit protein bS6</fullName>
    </recommendedName>
    <alternativeName>
        <fullName>30S ribosomal protein S6</fullName>
    </alternativeName>
</protein>
<feature type="chain" id="PRO_0000176750" description="Small ribosomal subunit protein bS6">
    <location>
        <begin position="1"/>
        <end position="112"/>
    </location>
</feature>
<dbReference type="EMBL" id="AE002160">
    <property type="protein sequence ID" value="AAF39058.1"/>
    <property type="molecule type" value="Genomic_DNA"/>
</dbReference>
<dbReference type="PIR" id="D81732">
    <property type="entry name" value="D81732"/>
</dbReference>
<dbReference type="RefSeq" id="WP_010229748.1">
    <property type="nucleotide sequence ID" value="NZ_CP063055.1"/>
</dbReference>
<dbReference type="SMR" id="Q9PLC1"/>
<dbReference type="GeneID" id="1246310"/>
<dbReference type="KEGG" id="cmu:TC_0184"/>
<dbReference type="eggNOG" id="COG0360">
    <property type="taxonomic scope" value="Bacteria"/>
</dbReference>
<dbReference type="HOGENOM" id="CLU_113441_5_2_0"/>
<dbReference type="OrthoDB" id="9812702at2"/>
<dbReference type="Proteomes" id="UP000000800">
    <property type="component" value="Chromosome"/>
</dbReference>
<dbReference type="GO" id="GO:0005737">
    <property type="term" value="C:cytoplasm"/>
    <property type="evidence" value="ECO:0007669"/>
    <property type="project" value="UniProtKB-ARBA"/>
</dbReference>
<dbReference type="GO" id="GO:1990904">
    <property type="term" value="C:ribonucleoprotein complex"/>
    <property type="evidence" value="ECO:0007669"/>
    <property type="project" value="UniProtKB-KW"/>
</dbReference>
<dbReference type="GO" id="GO:0005840">
    <property type="term" value="C:ribosome"/>
    <property type="evidence" value="ECO:0007669"/>
    <property type="project" value="UniProtKB-KW"/>
</dbReference>
<dbReference type="GO" id="GO:0070181">
    <property type="term" value="F:small ribosomal subunit rRNA binding"/>
    <property type="evidence" value="ECO:0007669"/>
    <property type="project" value="TreeGrafter"/>
</dbReference>
<dbReference type="GO" id="GO:0003735">
    <property type="term" value="F:structural constituent of ribosome"/>
    <property type="evidence" value="ECO:0007669"/>
    <property type="project" value="InterPro"/>
</dbReference>
<dbReference type="GO" id="GO:0006412">
    <property type="term" value="P:translation"/>
    <property type="evidence" value="ECO:0007669"/>
    <property type="project" value="UniProtKB-UniRule"/>
</dbReference>
<dbReference type="CDD" id="cd00473">
    <property type="entry name" value="bS6"/>
    <property type="match status" value="1"/>
</dbReference>
<dbReference type="Gene3D" id="3.30.70.60">
    <property type="match status" value="1"/>
</dbReference>
<dbReference type="HAMAP" id="MF_00360">
    <property type="entry name" value="Ribosomal_bS6"/>
    <property type="match status" value="1"/>
</dbReference>
<dbReference type="InterPro" id="IPR000529">
    <property type="entry name" value="Ribosomal_bS6"/>
</dbReference>
<dbReference type="InterPro" id="IPR035980">
    <property type="entry name" value="Ribosomal_bS6_sf"/>
</dbReference>
<dbReference type="InterPro" id="IPR020814">
    <property type="entry name" value="Ribosomal_S6_plastid/chlpt"/>
</dbReference>
<dbReference type="InterPro" id="IPR014717">
    <property type="entry name" value="Transl_elong_EF1B/ribsomal_bS6"/>
</dbReference>
<dbReference type="NCBIfam" id="TIGR00166">
    <property type="entry name" value="S6"/>
    <property type="match status" value="1"/>
</dbReference>
<dbReference type="PANTHER" id="PTHR21011">
    <property type="entry name" value="MITOCHONDRIAL 28S RIBOSOMAL PROTEIN S6"/>
    <property type="match status" value="1"/>
</dbReference>
<dbReference type="PANTHER" id="PTHR21011:SF1">
    <property type="entry name" value="SMALL RIBOSOMAL SUBUNIT PROTEIN BS6M"/>
    <property type="match status" value="1"/>
</dbReference>
<dbReference type="Pfam" id="PF01250">
    <property type="entry name" value="Ribosomal_S6"/>
    <property type="match status" value="1"/>
</dbReference>
<dbReference type="SUPFAM" id="SSF54995">
    <property type="entry name" value="Ribosomal protein S6"/>
    <property type="match status" value="1"/>
</dbReference>
<keyword id="KW-0687">Ribonucleoprotein</keyword>
<keyword id="KW-0689">Ribosomal protein</keyword>
<keyword id="KW-0694">RNA-binding</keyword>
<keyword id="KW-0699">rRNA-binding</keyword>
<name>RS6_CHLMU</name>
<sequence length="112" mass="12923">MKKKTGQLYEGAYVFSVTLSEDARRKALEKVTSGITNYGGEVLKIHDQGRKKLAYTIRGAREGYYYFIYFTVAPEAISELWREYHLNEDLLRFMTLKASAVKEVLEFATLPE</sequence>
<evidence type="ECO:0000250" key="1"/>
<evidence type="ECO:0000305" key="2"/>
<reference key="1">
    <citation type="journal article" date="2000" name="Nucleic Acids Res.">
        <title>Genome sequences of Chlamydia trachomatis MoPn and Chlamydia pneumoniae AR39.</title>
        <authorList>
            <person name="Read T.D."/>
            <person name="Brunham R.C."/>
            <person name="Shen C."/>
            <person name="Gill S.R."/>
            <person name="Heidelberg J.F."/>
            <person name="White O."/>
            <person name="Hickey E.K."/>
            <person name="Peterson J.D."/>
            <person name="Utterback T.R."/>
            <person name="Berry K.J."/>
            <person name="Bass S."/>
            <person name="Linher K.D."/>
            <person name="Weidman J.F."/>
            <person name="Khouri H.M."/>
            <person name="Craven B."/>
            <person name="Bowman C."/>
            <person name="Dodson R.J."/>
            <person name="Gwinn M.L."/>
            <person name="Nelson W.C."/>
            <person name="DeBoy R.T."/>
            <person name="Kolonay J.F."/>
            <person name="McClarty G."/>
            <person name="Salzberg S.L."/>
            <person name="Eisen J.A."/>
            <person name="Fraser C.M."/>
        </authorList>
    </citation>
    <scope>NUCLEOTIDE SEQUENCE [LARGE SCALE GENOMIC DNA]</scope>
    <source>
        <strain>MoPn / Nigg</strain>
    </source>
</reference>
<accession>Q9PLC1</accession>
<proteinExistence type="inferred from homology"/>
<gene>
    <name type="primary">rpsF</name>
    <name type="ordered locus">TC_0184</name>
</gene>